<feature type="chain" id="PRO_0000161412" description="Inner membrane protein YghB">
    <location>
        <begin position="1"/>
        <end position="219"/>
    </location>
</feature>
<feature type="topological domain" description="Cytoplasmic" evidence="2">
    <location>
        <begin position="1"/>
        <end position="17"/>
    </location>
</feature>
<feature type="transmembrane region" description="Helical" evidence="2">
    <location>
        <begin position="18"/>
        <end position="38"/>
    </location>
</feature>
<feature type="topological domain" description="Periplasmic" evidence="2">
    <location>
        <begin position="39"/>
        <end position="67"/>
    </location>
</feature>
<feature type="transmembrane region" description="Helical" evidence="2">
    <location>
        <begin position="68"/>
        <end position="88"/>
    </location>
</feature>
<feature type="topological domain" description="Cytoplasmic" evidence="2">
    <location>
        <begin position="89"/>
        <end position="160"/>
    </location>
</feature>
<feature type="transmembrane region" description="Helical" evidence="2">
    <location>
        <begin position="161"/>
        <end position="181"/>
    </location>
</feature>
<feature type="topological domain" description="Periplasmic" evidence="2">
    <location>
        <begin position="182"/>
        <end position="191"/>
    </location>
</feature>
<feature type="transmembrane region" description="Helical" evidence="2">
    <location>
        <begin position="192"/>
        <end position="212"/>
    </location>
</feature>
<feature type="topological domain" description="Cytoplasmic" evidence="2">
    <location>
        <begin position="213"/>
        <end position="219"/>
    </location>
</feature>
<organism>
    <name type="scientific">Escherichia coli O6:H1 (strain CFT073 / ATCC 700928 / UPEC)</name>
    <dbReference type="NCBI Taxonomy" id="199310"/>
    <lineage>
        <taxon>Bacteria</taxon>
        <taxon>Pseudomonadati</taxon>
        <taxon>Pseudomonadota</taxon>
        <taxon>Gammaproteobacteria</taxon>
        <taxon>Enterobacterales</taxon>
        <taxon>Enterobacteriaceae</taxon>
        <taxon>Escherichia</taxon>
    </lineage>
</organism>
<keyword id="KW-0997">Cell inner membrane</keyword>
<keyword id="KW-1003">Cell membrane</keyword>
<keyword id="KW-0472">Membrane</keyword>
<keyword id="KW-1185">Reference proteome</keyword>
<keyword id="KW-0812">Transmembrane</keyword>
<keyword id="KW-1133">Transmembrane helix</keyword>
<sequence length="219" mass="24134">MAVIQDIIAALWQHDFAALADPHIVSVVYFVMFATLFLENGLLPASFLPGDSLLILAGALIAQGVMDFLPTIAILTAAASLGCWLSYIQGRWLGNTKTVKGWLAQLPAKYHQRATCMFDRHGLLALLAGRFLAFVRTLLPTMAGISGLPNRRFQFFNWLSGLLWVSVVTSFGYALSMIPFVKRHEDQVMTFLMILPIALLTAGLLGTLFVVIKKKYCNA</sequence>
<evidence type="ECO:0000250" key="1"/>
<evidence type="ECO:0000255" key="2"/>
<evidence type="ECO:0000305" key="3"/>
<proteinExistence type="inferred from homology"/>
<reference key="1">
    <citation type="journal article" date="2002" name="Proc. Natl. Acad. Sci. U.S.A.">
        <title>Extensive mosaic structure revealed by the complete genome sequence of uropathogenic Escherichia coli.</title>
        <authorList>
            <person name="Welch R.A."/>
            <person name="Burland V."/>
            <person name="Plunkett G. III"/>
            <person name="Redford P."/>
            <person name="Roesch P."/>
            <person name="Rasko D."/>
            <person name="Buckles E.L."/>
            <person name="Liou S.-R."/>
            <person name="Boutin A."/>
            <person name="Hackett J."/>
            <person name="Stroud D."/>
            <person name="Mayhew G.F."/>
            <person name="Rose D.J."/>
            <person name="Zhou S."/>
            <person name="Schwartz D.C."/>
            <person name="Perna N.T."/>
            <person name="Mobley H.L.T."/>
            <person name="Donnenberg M.S."/>
            <person name="Blattner F.R."/>
        </authorList>
    </citation>
    <scope>NUCLEOTIDE SEQUENCE [LARGE SCALE GENOMIC DNA]</scope>
    <source>
        <strain>CFT073 / ATCC 700928 / UPEC</strain>
    </source>
</reference>
<protein>
    <recommendedName>
        <fullName>Inner membrane protein YghB</fullName>
    </recommendedName>
</protein>
<comment type="subcellular location">
    <subcellularLocation>
        <location evidence="1">Cell inner membrane</location>
        <topology evidence="1">Multi-pass membrane protein</topology>
    </subcellularLocation>
</comment>
<comment type="similarity">
    <text evidence="3">Belongs to the DedA family.</text>
</comment>
<dbReference type="EMBL" id="AE014075">
    <property type="protein sequence ID" value="AAN82187.1"/>
    <property type="molecule type" value="Genomic_DNA"/>
</dbReference>
<dbReference type="RefSeq" id="WP_000268419.1">
    <property type="nucleotide sequence ID" value="NZ_CP051263.1"/>
</dbReference>
<dbReference type="STRING" id="199310.c3743"/>
<dbReference type="GeneID" id="93778979"/>
<dbReference type="KEGG" id="ecc:c3743"/>
<dbReference type="eggNOG" id="COG0586">
    <property type="taxonomic scope" value="Bacteria"/>
</dbReference>
<dbReference type="HOGENOM" id="CLU_044208_6_2_6"/>
<dbReference type="BioCyc" id="ECOL199310:C3743-MONOMER"/>
<dbReference type="Proteomes" id="UP000001410">
    <property type="component" value="Chromosome"/>
</dbReference>
<dbReference type="GO" id="GO:0005886">
    <property type="term" value="C:plasma membrane"/>
    <property type="evidence" value="ECO:0007669"/>
    <property type="project" value="UniProtKB-SubCell"/>
</dbReference>
<dbReference type="InterPro" id="IPR032818">
    <property type="entry name" value="DedA-like"/>
</dbReference>
<dbReference type="InterPro" id="IPR032816">
    <property type="entry name" value="VTT_dom"/>
</dbReference>
<dbReference type="PANTHER" id="PTHR30353">
    <property type="entry name" value="INNER MEMBRANE PROTEIN DEDA-RELATED"/>
    <property type="match status" value="1"/>
</dbReference>
<dbReference type="PANTHER" id="PTHR30353:SF10">
    <property type="entry name" value="INNER MEMBRANE PROTEIN YGHB"/>
    <property type="match status" value="1"/>
</dbReference>
<dbReference type="Pfam" id="PF09335">
    <property type="entry name" value="VTT_dom"/>
    <property type="match status" value="1"/>
</dbReference>
<gene>
    <name type="primary">yghB</name>
    <name type="ordered locus">c3743</name>
</gene>
<name>YGHB_ECOL6</name>
<accession>P0AA61</accession>
<accession>P33196</accession>